<evidence type="ECO:0000255" key="1">
    <source>
        <dbReference type="HAMAP-Rule" id="MF_00113"/>
    </source>
</evidence>
<sequence length="343" mass="38510">MKTSDFDYNLPQEYIAQKPVEPRDSSRLLVLNRQSGELTNRIFGEITDYFKPGDVLVMNDSRVLPARIKGIKQDTSAKIEILLLKRDGEGCWEALLKPGKRTKPGTIIDIHQKGGVVSIQAEVLADKEDGIKLLRFSDETHLMKLGEVPLPPYIHTPVADPERYQTVYALTNGSVAAPTAGLHFTPELLKRLTEMGVICTYVTLHIGLDTFRPVKEEDPKDHKIHREYGILSKETASAICCAKETGKRVFCVGTSATRLVEQASHLSQTSLITSYSGWADLFILPGYKFRVADCFITNFHLPRSTPLMLTSAFAGWPFLRKAYEKAISEHYRFYSFGDAMLIL</sequence>
<accession>Q3ZXG6</accession>
<dbReference type="EC" id="2.4.99.17" evidence="1"/>
<dbReference type="EMBL" id="AJ965256">
    <property type="protein sequence ID" value="CAI82929.1"/>
    <property type="molecule type" value="Genomic_DNA"/>
</dbReference>
<dbReference type="RefSeq" id="WP_011309280.1">
    <property type="nucleotide sequence ID" value="NC_007356.1"/>
</dbReference>
<dbReference type="SMR" id="Q3ZXG6"/>
<dbReference type="KEGG" id="deh:cbdbA775"/>
<dbReference type="HOGENOM" id="CLU_039110_1_0_0"/>
<dbReference type="UniPathway" id="UPA00392"/>
<dbReference type="Proteomes" id="UP000000433">
    <property type="component" value="Chromosome"/>
</dbReference>
<dbReference type="GO" id="GO:0005737">
    <property type="term" value="C:cytoplasm"/>
    <property type="evidence" value="ECO:0007669"/>
    <property type="project" value="UniProtKB-SubCell"/>
</dbReference>
<dbReference type="GO" id="GO:0051075">
    <property type="term" value="F:S-adenosylmethionine:tRNA ribosyltransferase-isomerase activity"/>
    <property type="evidence" value="ECO:0007669"/>
    <property type="project" value="UniProtKB-EC"/>
</dbReference>
<dbReference type="GO" id="GO:0008616">
    <property type="term" value="P:queuosine biosynthetic process"/>
    <property type="evidence" value="ECO:0007669"/>
    <property type="project" value="UniProtKB-UniRule"/>
</dbReference>
<dbReference type="GO" id="GO:0002099">
    <property type="term" value="P:tRNA wobble guanine modification"/>
    <property type="evidence" value="ECO:0007669"/>
    <property type="project" value="TreeGrafter"/>
</dbReference>
<dbReference type="FunFam" id="2.40.10.240:FF:000002">
    <property type="entry name" value="S-adenosylmethionine:tRNA ribosyltransferase-isomerase"/>
    <property type="match status" value="1"/>
</dbReference>
<dbReference type="Gene3D" id="2.40.10.240">
    <property type="entry name" value="QueA-like"/>
    <property type="match status" value="1"/>
</dbReference>
<dbReference type="Gene3D" id="3.40.1780.10">
    <property type="entry name" value="QueA-like"/>
    <property type="match status" value="1"/>
</dbReference>
<dbReference type="HAMAP" id="MF_00113">
    <property type="entry name" value="QueA"/>
    <property type="match status" value="1"/>
</dbReference>
<dbReference type="InterPro" id="IPR003699">
    <property type="entry name" value="QueA"/>
</dbReference>
<dbReference type="InterPro" id="IPR042118">
    <property type="entry name" value="QueA_dom1"/>
</dbReference>
<dbReference type="InterPro" id="IPR042119">
    <property type="entry name" value="QueA_dom2"/>
</dbReference>
<dbReference type="InterPro" id="IPR036100">
    <property type="entry name" value="QueA_sf"/>
</dbReference>
<dbReference type="NCBIfam" id="NF001140">
    <property type="entry name" value="PRK00147.1"/>
    <property type="match status" value="1"/>
</dbReference>
<dbReference type="NCBIfam" id="TIGR00113">
    <property type="entry name" value="queA"/>
    <property type="match status" value="1"/>
</dbReference>
<dbReference type="PANTHER" id="PTHR30307">
    <property type="entry name" value="S-ADENOSYLMETHIONINE:TRNA RIBOSYLTRANSFERASE-ISOMERASE"/>
    <property type="match status" value="1"/>
</dbReference>
<dbReference type="PANTHER" id="PTHR30307:SF0">
    <property type="entry name" value="S-ADENOSYLMETHIONINE:TRNA RIBOSYLTRANSFERASE-ISOMERASE"/>
    <property type="match status" value="1"/>
</dbReference>
<dbReference type="Pfam" id="PF02547">
    <property type="entry name" value="Queuosine_synth"/>
    <property type="match status" value="1"/>
</dbReference>
<dbReference type="SUPFAM" id="SSF111337">
    <property type="entry name" value="QueA-like"/>
    <property type="match status" value="1"/>
</dbReference>
<name>QUEA_DEHMC</name>
<proteinExistence type="inferred from homology"/>
<organism>
    <name type="scientific">Dehalococcoides mccartyi (strain CBDB1)</name>
    <dbReference type="NCBI Taxonomy" id="255470"/>
    <lineage>
        <taxon>Bacteria</taxon>
        <taxon>Bacillati</taxon>
        <taxon>Chloroflexota</taxon>
        <taxon>Dehalococcoidia</taxon>
        <taxon>Dehalococcoidales</taxon>
        <taxon>Dehalococcoidaceae</taxon>
        <taxon>Dehalococcoides</taxon>
    </lineage>
</organism>
<keyword id="KW-0963">Cytoplasm</keyword>
<keyword id="KW-0671">Queuosine biosynthesis</keyword>
<keyword id="KW-0949">S-adenosyl-L-methionine</keyword>
<keyword id="KW-0808">Transferase</keyword>
<comment type="function">
    <text evidence="1">Transfers and isomerizes the ribose moiety from AdoMet to the 7-aminomethyl group of 7-deazaguanine (preQ1-tRNA) to give epoxyqueuosine (oQ-tRNA).</text>
</comment>
<comment type="catalytic activity">
    <reaction evidence="1">
        <text>7-aminomethyl-7-carbaguanosine(34) in tRNA + S-adenosyl-L-methionine = epoxyqueuosine(34) in tRNA + adenine + L-methionine + 2 H(+)</text>
        <dbReference type="Rhea" id="RHEA:32155"/>
        <dbReference type="Rhea" id="RHEA-COMP:10342"/>
        <dbReference type="Rhea" id="RHEA-COMP:18582"/>
        <dbReference type="ChEBI" id="CHEBI:15378"/>
        <dbReference type="ChEBI" id="CHEBI:16708"/>
        <dbReference type="ChEBI" id="CHEBI:57844"/>
        <dbReference type="ChEBI" id="CHEBI:59789"/>
        <dbReference type="ChEBI" id="CHEBI:82833"/>
        <dbReference type="ChEBI" id="CHEBI:194443"/>
        <dbReference type="EC" id="2.4.99.17"/>
    </reaction>
</comment>
<comment type="pathway">
    <text evidence="1">tRNA modification; tRNA-queuosine biosynthesis.</text>
</comment>
<comment type="subunit">
    <text evidence="1">Monomer.</text>
</comment>
<comment type="subcellular location">
    <subcellularLocation>
        <location evidence="1">Cytoplasm</location>
    </subcellularLocation>
</comment>
<comment type="similarity">
    <text evidence="1">Belongs to the QueA family.</text>
</comment>
<reference key="1">
    <citation type="journal article" date="2005" name="Nat. Biotechnol.">
        <title>Genome sequence of the chlorinated compound-respiring bacterium Dehalococcoides species strain CBDB1.</title>
        <authorList>
            <person name="Kube M."/>
            <person name="Beck A."/>
            <person name="Zinder S.H."/>
            <person name="Kuhl H."/>
            <person name="Reinhardt R."/>
            <person name="Adrian L."/>
        </authorList>
    </citation>
    <scope>NUCLEOTIDE SEQUENCE [LARGE SCALE GENOMIC DNA]</scope>
    <source>
        <strain>CBDB1</strain>
    </source>
</reference>
<feature type="chain" id="PRO_0000231332" description="S-adenosylmethionine:tRNA ribosyltransferase-isomerase">
    <location>
        <begin position="1"/>
        <end position="343"/>
    </location>
</feature>
<protein>
    <recommendedName>
        <fullName evidence="1">S-adenosylmethionine:tRNA ribosyltransferase-isomerase</fullName>
        <ecNumber evidence="1">2.4.99.17</ecNumber>
    </recommendedName>
    <alternativeName>
        <fullName evidence="1">Queuosine biosynthesis protein QueA</fullName>
    </alternativeName>
</protein>
<gene>
    <name evidence="1" type="primary">queA</name>
    <name type="ordered locus">cbdbA775</name>
</gene>